<protein>
    <recommendedName>
        <fullName evidence="1">Putative N-acetylmannosamine-6-phosphate 2-epimerase</fullName>
        <ecNumber evidence="1">5.1.3.9</ecNumber>
    </recommendedName>
    <alternativeName>
        <fullName evidence="1">ManNAc-6-P epimerase</fullName>
    </alternativeName>
</protein>
<comment type="function">
    <text evidence="1">Converts N-acetylmannosamine-6-phosphate (ManNAc-6-P) to N-acetylglucosamine-6-phosphate (GlcNAc-6-P).</text>
</comment>
<comment type="catalytic activity">
    <reaction evidence="1">
        <text>an N-acyl-D-glucosamine 6-phosphate = an N-acyl-D-mannosamine 6-phosphate</text>
        <dbReference type="Rhea" id="RHEA:23932"/>
        <dbReference type="ChEBI" id="CHEBI:57599"/>
        <dbReference type="ChEBI" id="CHEBI:57666"/>
        <dbReference type="EC" id="5.1.3.9"/>
    </reaction>
</comment>
<comment type="pathway">
    <text evidence="1">Amino-sugar metabolism; N-acetylneuraminate degradation; D-fructose 6-phosphate from N-acetylneuraminate: step 3/5.</text>
</comment>
<comment type="similarity">
    <text evidence="1">Belongs to the NanE family.</text>
</comment>
<gene>
    <name evidence="1" type="primary">nanE</name>
    <name type="ordered locus">CPR_0174</name>
</gene>
<feature type="chain" id="PRO_0000301469" description="Putative N-acetylmannosamine-6-phosphate 2-epimerase">
    <location>
        <begin position="1"/>
        <end position="221"/>
    </location>
</feature>
<name>NANE_CLOPS</name>
<dbReference type="EC" id="5.1.3.9" evidence="1"/>
<dbReference type="EMBL" id="CP000312">
    <property type="protein sequence ID" value="ABG87344.1"/>
    <property type="molecule type" value="Genomic_DNA"/>
</dbReference>
<dbReference type="RefSeq" id="WP_011591325.1">
    <property type="nucleotide sequence ID" value="NC_008262.1"/>
</dbReference>
<dbReference type="SMR" id="Q0SWI9"/>
<dbReference type="KEGG" id="cpr:CPR_0174"/>
<dbReference type="UniPathway" id="UPA00629">
    <property type="reaction ID" value="UER00682"/>
</dbReference>
<dbReference type="Proteomes" id="UP000001824">
    <property type="component" value="Chromosome"/>
</dbReference>
<dbReference type="GO" id="GO:0005829">
    <property type="term" value="C:cytosol"/>
    <property type="evidence" value="ECO:0007669"/>
    <property type="project" value="TreeGrafter"/>
</dbReference>
<dbReference type="GO" id="GO:0047465">
    <property type="term" value="F:N-acylglucosamine-6-phosphate 2-epimerase activity"/>
    <property type="evidence" value="ECO:0007669"/>
    <property type="project" value="UniProtKB-EC"/>
</dbReference>
<dbReference type="GO" id="GO:0005975">
    <property type="term" value="P:carbohydrate metabolic process"/>
    <property type="evidence" value="ECO:0007669"/>
    <property type="project" value="UniProtKB-UniRule"/>
</dbReference>
<dbReference type="GO" id="GO:0006053">
    <property type="term" value="P:N-acetylmannosamine catabolic process"/>
    <property type="evidence" value="ECO:0007669"/>
    <property type="project" value="TreeGrafter"/>
</dbReference>
<dbReference type="GO" id="GO:0019262">
    <property type="term" value="P:N-acetylneuraminate catabolic process"/>
    <property type="evidence" value="ECO:0007669"/>
    <property type="project" value="UniProtKB-UniRule"/>
</dbReference>
<dbReference type="CDD" id="cd04729">
    <property type="entry name" value="NanE"/>
    <property type="match status" value="1"/>
</dbReference>
<dbReference type="FunFam" id="3.20.20.70:FF:000035">
    <property type="entry name" value="Putative N-acetylmannosamine-6-phosphate 2-epimerase"/>
    <property type="match status" value="1"/>
</dbReference>
<dbReference type="Gene3D" id="3.20.20.70">
    <property type="entry name" value="Aldolase class I"/>
    <property type="match status" value="1"/>
</dbReference>
<dbReference type="HAMAP" id="MF_01235">
    <property type="entry name" value="ManNAc6P_epimer"/>
    <property type="match status" value="1"/>
</dbReference>
<dbReference type="InterPro" id="IPR013785">
    <property type="entry name" value="Aldolase_TIM"/>
</dbReference>
<dbReference type="InterPro" id="IPR007260">
    <property type="entry name" value="NanE"/>
</dbReference>
<dbReference type="InterPro" id="IPR011060">
    <property type="entry name" value="RibuloseP-bd_barrel"/>
</dbReference>
<dbReference type="NCBIfam" id="NF002231">
    <property type="entry name" value="PRK01130.1"/>
    <property type="match status" value="1"/>
</dbReference>
<dbReference type="PANTHER" id="PTHR36204">
    <property type="entry name" value="N-ACETYLMANNOSAMINE-6-PHOSPHATE 2-EPIMERASE-RELATED"/>
    <property type="match status" value="1"/>
</dbReference>
<dbReference type="PANTHER" id="PTHR36204:SF1">
    <property type="entry name" value="N-ACETYLMANNOSAMINE-6-PHOSPHATE 2-EPIMERASE-RELATED"/>
    <property type="match status" value="1"/>
</dbReference>
<dbReference type="Pfam" id="PF04131">
    <property type="entry name" value="NanE"/>
    <property type="match status" value="1"/>
</dbReference>
<dbReference type="SUPFAM" id="SSF51366">
    <property type="entry name" value="Ribulose-phoshate binding barrel"/>
    <property type="match status" value="1"/>
</dbReference>
<keyword id="KW-0119">Carbohydrate metabolism</keyword>
<keyword id="KW-0413">Isomerase</keyword>
<reference key="1">
    <citation type="journal article" date="2006" name="Genome Res.">
        <title>Skewed genomic variability in strains of the toxigenic bacterial pathogen, Clostridium perfringens.</title>
        <authorList>
            <person name="Myers G.S.A."/>
            <person name="Rasko D.A."/>
            <person name="Cheung J.K."/>
            <person name="Ravel J."/>
            <person name="Seshadri R."/>
            <person name="DeBoy R.T."/>
            <person name="Ren Q."/>
            <person name="Varga J."/>
            <person name="Awad M.M."/>
            <person name="Brinkac L.M."/>
            <person name="Daugherty S.C."/>
            <person name="Haft D.H."/>
            <person name="Dodson R.J."/>
            <person name="Madupu R."/>
            <person name="Nelson W.C."/>
            <person name="Rosovitz M.J."/>
            <person name="Sullivan S.A."/>
            <person name="Khouri H."/>
            <person name="Dimitrov G.I."/>
            <person name="Watkins K.L."/>
            <person name="Mulligan S."/>
            <person name="Benton J."/>
            <person name="Radune D."/>
            <person name="Fisher D.J."/>
            <person name="Atkins H.S."/>
            <person name="Hiscox T."/>
            <person name="Jost B.H."/>
            <person name="Billington S.J."/>
            <person name="Songer J.G."/>
            <person name="McClane B.A."/>
            <person name="Titball R.W."/>
            <person name="Rood J.I."/>
            <person name="Melville S.B."/>
            <person name="Paulsen I.T."/>
        </authorList>
    </citation>
    <scope>NUCLEOTIDE SEQUENCE [LARGE SCALE GENOMIC DNA]</scope>
    <source>
        <strain>SM101 / Type A</strain>
    </source>
</reference>
<accession>Q0SWI9</accession>
<sequence>MLDVVKGNLIVSCQALSDEPLHSSFIMGRMAIAAKQGGAAAIRAQGIDDINEIKEVTKLPIIGIIKRNYDDSEIYITPTMKEVDELLKTDCEMIALDATKRKRPNGENIKDLVDAIHAKGRLAMADISTLEEGIEAEKLGFDCVSTTLSGYTPYSKQSNSVDFELLEELVKTVKIPVICEGRINTPEELKKALDLGAYSAVVGGAITRPQQITKRFTDILK</sequence>
<evidence type="ECO:0000255" key="1">
    <source>
        <dbReference type="HAMAP-Rule" id="MF_01235"/>
    </source>
</evidence>
<organism>
    <name type="scientific">Clostridium perfringens (strain SM101 / Type A)</name>
    <dbReference type="NCBI Taxonomy" id="289380"/>
    <lineage>
        <taxon>Bacteria</taxon>
        <taxon>Bacillati</taxon>
        <taxon>Bacillota</taxon>
        <taxon>Clostridia</taxon>
        <taxon>Eubacteriales</taxon>
        <taxon>Clostridiaceae</taxon>
        <taxon>Clostridium</taxon>
    </lineage>
</organism>
<proteinExistence type="inferred from homology"/>